<organism>
    <name type="scientific">Oryza sativa subsp. indica</name>
    <name type="common">Rice</name>
    <dbReference type="NCBI Taxonomy" id="39946"/>
    <lineage>
        <taxon>Eukaryota</taxon>
        <taxon>Viridiplantae</taxon>
        <taxon>Streptophyta</taxon>
        <taxon>Embryophyta</taxon>
        <taxon>Tracheophyta</taxon>
        <taxon>Spermatophyta</taxon>
        <taxon>Magnoliopsida</taxon>
        <taxon>Liliopsida</taxon>
        <taxon>Poales</taxon>
        <taxon>Poaceae</taxon>
        <taxon>BOP clade</taxon>
        <taxon>Oryzoideae</taxon>
        <taxon>Oryzeae</taxon>
        <taxon>Oryzinae</taxon>
        <taxon>Oryza</taxon>
        <taxon>Oryza sativa</taxon>
    </lineage>
</organism>
<sequence>MAAAAPATAAVRRMKLGSQGLEVSAQGLGCMGMSAFYGPPKPEPDMVALIHHAVAAGVTLLDTSDIYGPHTNELLLGKALQGGVRDKVELATKFGIAFEDGKRGVRGDPAYVRAACEGSLRRLGVDSIDLYYQHRVDKKVPIEVTIGELKKLVEEGKIKYIGLSEASASTIRRAHAVHPITAVQLEWSLWSRDVEEDIIPTCRELGIGIVAYSPLGRGFFSAGAKLVESLSDQDFRKHIPRFQQENLEKNAEIFERVNAMAARKGCTPSQLALAWVHHQGSDVCPIPGTTKIENLNQNIGALSVKLTPEEMAELESYASTDDVRGDRYPQAMANTTWQNSETPPLSSWKAQ</sequence>
<comment type="similarity">
    <text evidence="3">Belongs to the aldo/keto reductase family.</text>
</comment>
<accession>A2XRZ0</accession>
<accession>Q01KU8</accession>
<keyword id="KW-0521">NADP</keyword>
<keyword id="KW-0560">Oxidoreductase</keyword>
<keyword id="KW-1185">Reference proteome</keyword>
<protein>
    <recommendedName>
        <fullName>Probable aldo-keto reductase 2</fullName>
        <ecNumber>1.1.1.-</ecNumber>
    </recommendedName>
</protein>
<evidence type="ECO:0000250" key="1"/>
<evidence type="ECO:0000256" key="2">
    <source>
        <dbReference type="SAM" id="MobiDB-lite"/>
    </source>
</evidence>
<evidence type="ECO:0000305" key="3"/>
<reference key="1">
    <citation type="journal article" date="2002" name="Nature">
        <title>Sequence and analysis of rice chromosome 4.</title>
        <authorList>
            <person name="Feng Q."/>
            <person name="Zhang Y."/>
            <person name="Hao P."/>
            <person name="Wang S."/>
            <person name="Fu G."/>
            <person name="Huang Y."/>
            <person name="Li Y."/>
            <person name="Zhu J."/>
            <person name="Liu Y."/>
            <person name="Hu X."/>
            <person name="Jia P."/>
            <person name="Zhang Y."/>
            <person name="Zhao Q."/>
            <person name="Ying K."/>
            <person name="Yu S."/>
            <person name="Tang Y."/>
            <person name="Weng Q."/>
            <person name="Zhang L."/>
            <person name="Lu Y."/>
            <person name="Mu J."/>
            <person name="Lu Y."/>
            <person name="Zhang L.S."/>
            <person name="Yu Z."/>
            <person name="Fan D."/>
            <person name="Liu X."/>
            <person name="Lu T."/>
            <person name="Li C."/>
            <person name="Wu Y."/>
            <person name="Sun T."/>
            <person name="Lei H."/>
            <person name="Li T."/>
            <person name="Hu H."/>
            <person name="Guan J."/>
            <person name="Wu M."/>
            <person name="Zhang R."/>
            <person name="Zhou B."/>
            <person name="Chen Z."/>
            <person name="Chen L."/>
            <person name="Jin Z."/>
            <person name="Wang R."/>
            <person name="Yin H."/>
            <person name="Cai Z."/>
            <person name="Ren S."/>
            <person name="Lv G."/>
            <person name="Gu W."/>
            <person name="Zhu G."/>
            <person name="Tu Y."/>
            <person name="Jia J."/>
            <person name="Zhang Y."/>
            <person name="Chen J."/>
            <person name="Kang H."/>
            <person name="Chen X."/>
            <person name="Shao C."/>
            <person name="Sun Y."/>
            <person name="Hu Q."/>
            <person name="Zhang X."/>
            <person name="Zhang W."/>
            <person name="Wang L."/>
            <person name="Ding C."/>
            <person name="Sheng H."/>
            <person name="Gu J."/>
            <person name="Chen S."/>
            <person name="Ni L."/>
            <person name="Zhu F."/>
            <person name="Chen W."/>
            <person name="Lan L."/>
            <person name="Lai Y."/>
            <person name="Cheng Z."/>
            <person name="Gu M."/>
            <person name="Jiang J."/>
            <person name="Li J."/>
            <person name="Hong G."/>
            <person name="Xue Y."/>
            <person name="Han B."/>
        </authorList>
    </citation>
    <scope>NUCLEOTIDE SEQUENCE [LARGE SCALE GENOMIC DNA]</scope>
    <source>
        <strain>cv. Guang-Lu-Ai No.4</strain>
    </source>
</reference>
<reference key="2">
    <citation type="journal article" date="2005" name="PLoS Biol.">
        <title>The genomes of Oryza sativa: a history of duplications.</title>
        <authorList>
            <person name="Yu J."/>
            <person name="Wang J."/>
            <person name="Lin W."/>
            <person name="Li S."/>
            <person name="Li H."/>
            <person name="Zhou J."/>
            <person name="Ni P."/>
            <person name="Dong W."/>
            <person name="Hu S."/>
            <person name="Zeng C."/>
            <person name="Zhang J."/>
            <person name="Zhang Y."/>
            <person name="Li R."/>
            <person name="Xu Z."/>
            <person name="Li S."/>
            <person name="Li X."/>
            <person name="Zheng H."/>
            <person name="Cong L."/>
            <person name="Lin L."/>
            <person name="Yin J."/>
            <person name="Geng J."/>
            <person name="Li G."/>
            <person name="Shi J."/>
            <person name="Liu J."/>
            <person name="Lv H."/>
            <person name="Li J."/>
            <person name="Wang J."/>
            <person name="Deng Y."/>
            <person name="Ran L."/>
            <person name="Shi X."/>
            <person name="Wang X."/>
            <person name="Wu Q."/>
            <person name="Li C."/>
            <person name="Ren X."/>
            <person name="Wang J."/>
            <person name="Wang X."/>
            <person name="Li D."/>
            <person name="Liu D."/>
            <person name="Zhang X."/>
            <person name="Ji Z."/>
            <person name="Zhao W."/>
            <person name="Sun Y."/>
            <person name="Zhang Z."/>
            <person name="Bao J."/>
            <person name="Han Y."/>
            <person name="Dong L."/>
            <person name="Ji J."/>
            <person name="Chen P."/>
            <person name="Wu S."/>
            <person name="Liu J."/>
            <person name="Xiao Y."/>
            <person name="Bu D."/>
            <person name="Tan J."/>
            <person name="Yang L."/>
            <person name="Ye C."/>
            <person name="Zhang J."/>
            <person name="Xu J."/>
            <person name="Zhou Y."/>
            <person name="Yu Y."/>
            <person name="Zhang B."/>
            <person name="Zhuang S."/>
            <person name="Wei H."/>
            <person name="Liu B."/>
            <person name="Lei M."/>
            <person name="Yu H."/>
            <person name="Li Y."/>
            <person name="Xu H."/>
            <person name="Wei S."/>
            <person name="He X."/>
            <person name="Fang L."/>
            <person name="Zhang Z."/>
            <person name="Zhang Y."/>
            <person name="Huang X."/>
            <person name="Su Z."/>
            <person name="Tong W."/>
            <person name="Li J."/>
            <person name="Tong Z."/>
            <person name="Li S."/>
            <person name="Ye J."/>
            <person name="Wang L."/>
            <person name="Fang L."/>
            <person name="Lei T."/>
            <person name="Chen C.-S."/>
            <person name="Chen H.-C."/>
            <person name="Xu Z."/>
            <person name="Li H."/>
            <person name="Huang H."/>
            <person name="Zhang F."/>
            <person name="Xu H."/>
            <person name="Li N."/>
            <person name="Zhao C."/>
            <person name="Li S."/>
            <person name="Dong L."/>
            <person name="Huang Y."/>
            <person name="Li L."/>
            <person name="Xi Y."/>
            <person name="Qi Q."/>
            <person name="Li W."/>
            <person name="Zhang B."/>
            <person name="Hu W."/>
            <person name="Zhang Y."/>
            <person name="Tian X."/>
            <person name="Jiao Y."/>
            <person name="Liang X."/>
            <person name="Jin J."/>
            <person name="Gao L."/>
            <person name="Zheng W."/>
            <person name="Hao B."/>
            <person name="Liu S.-M."/>
            <person name="Wang W."/>
            <person name="Yuan L."/>
            <person name="Cao M."/>
            <person name="McDermott J."/>
            <person name="Samudrala R."/>
            <person name="Wang J."/>
            <person name="Wong G.K.-S."/>
            <person name="Yang H."/>
        </authorList>
    </citation>
    <scope>NUCLEOTIDE SEQUENCE [LARGE SCALE GENOMIC DNA]</scope>
    <source>
        <strain>cv. 93-11</strain>
    </source>
</reference>
<proteinExistence type="inferred from homology"/>
<dbReference type="EC" id="1.1.1.-"/>
<dbReference type="EMBL" id="CR855122">
    <property type="protein sequence ID" value="CAH66623.1"/>
    <property type="molecule type" value="Genomic_DNA"/>
</dbReference>
<dbReference type="EMBL" id="CM000129">
    <property type="protein sequence ID" value="EAY93600.1"/>
    <property type="molecule type" value="Genomic_DNA"/>
</dbReference>
<dbReference type="SMR" id="A2XRZ0"/>
<dbReference type="STRING" id="39946.A2XRZ0"/>
<dbReference type="EnsemblPlants" id="BGIOSGA016143-TA">
    <property type="protein sequence ID" value="BGIOSGA016143-PA"/>
    <property type="gene ID" value="BGIOSGA016143"/>
</dbReference>
<dbReference type="EnsemblPlants" id="OsLaMu_04g0008980.02">
    <property type="protein sequence ID" value="OsLaMu_04g0008980.02"/>
    <property type="gene ID" value="OsLaMu_04g0008980"/>
</dbReference>
<dbReference type="Gramene" id="BGIOSGA016143-TA">
    <property type="protein sequence ID" value="BGIOSGA016143-PA"/>
    <property type="gene ID" value="BGIOSGA016143"/>
</dbReference>
<dbReference type="Gramene" id="OsLaMu_04g0008980.02">
    <property type="protein sequence ID" value="OsLaMu_04g0008980.02"/>
    <property type="gene ID" value="OsLaMu_04g0008980"/>
</dbReference>
<dbReference type="HOGENOM" id="CLU_023205_2_1_1"/>
<dbReference type="OMA" id="MSDFYTT"/>
<dbReference type="Proteomes" id="UP000007015">
    <property type="component" value="Chromosome 4"/>
</dbReference>
<dbReference type="GO" id="GO:0005737">
    <property type="term" value="C:cytoplasm"/>
    <property type="evidence" value="ECO:0007669"/>
    <property type="project" value="TreeGrafter"/>
</dbReference>
<dbReference type="GO" id="GO:0004033">
    <property type="term" value="F:aldo-keto reductase (NADPH) activity"/>
    <property type="evidence" value="ECO:0007669"/>
    <property type="project" value="TreeGrafter"/>
</dbReference>
<dbReference type="CDD" id="cd19145">
    <property type="entry name" value="AKR_AKR13D1"/>
    <property type="match status" value="1"/>
</dbReference>
<dbReference type="FunFam" id="3.20.20.100:FF:000048">
    <property type="entry name" value="Probable aldo-keto reductase 4"/>
    <property type="match status" value="1"/>
</dbReference>
<dbReference type="Gene3D" id="3.20.20.100">
    <property type="entry name" value="NADP-dependent oxidoreductase domain"/>
    <property type="match status" value="1"/>
</dbReference>
<dbReference type="InterPro" id="IPR050791">
    <property type="entry name" value="Aldo-Keto_reductase"/>
</dbReference>
<dbReference type="InterPro" id="IPR023210">
    <property type="entry name" value="NADP_OxRdtase_dom"/>
</dbReference>
<dbReference type="InterPro" id="IPR036812">
    <property type="entry name" value="NADP_OxRdtase_dom_sf"/>
</dbReference>
<dbReference type="PANTHER" id="PTHR43625">
    <property type="entry name" value="AFLATOXIN B1 ALDEHYDE REDUCTASE"/>
    <property type="match status" value="1"/>
</dbReference>
<dbReference type="PANTHER" id="PTHR43625:SF40">
    <property type="entry name" value="ALDO-KETO REDUCTASE YAKC [NADP(+)]"/>
    <property type="match status" value="1"/>
</dbReference>
<dbReference type="Pfam" id="PF00248">
    <property type="entry name" value="Aldo_ket_red"/>
    <property type="match status" value="1"/>
</dbReference>
<dbReference type="SUPFAM" id="SSF51430">
    <property type="entry name" value="NAD(P)-linked oxidoreductase"/>
    <property type="match status" value="1"/>
</dbReference>
<feature type="chain" id="PRO_0000415749" description="Probable aldo-keto reductase 2">
    <location>
        <begin position="1"/>
        <end position="351"/>
    </location>
</feature>
<feature type="region of interest" description="Disordered" evidence="2">
    <location>
        <begin position="317"/>
        <end position="351"/>
    </location>
</feature>
<feature type="compositionally biased region" description="Polar residues" evidence="2">
    <location>
        <begin position="332"/>
        <end position="351"/>
    </location>
</feature>
<feature type="active site" description="Proton donor" evidence="1">
    <location>
        <position position="67"/>
    </location>
</feature>
<feature type="binding site" evidence="1">
    <location>
        <position position="134"/>
    </location>
    <ligand>
        <name>substrate</name>
    </ligand>
</feature>
<feature type="binding site" evidence="1">
    <location>
        <begin position="213"/>
        <end position="223"/>
    </location>
    <ligand>
        <name>NADP(+)</name>
        <dbReference type="ChEBI" id="CHEBI:58349"/>
    </ligand>
</feature>
<name>AKR2_ORYSI</name>
<gene>
    <name type="ORF">OsI_15387</name>
    <name type="ORF">OSIGBa0115A19.4</name>
</gene>